<sequence length="221" mass="23538">MLDLFKAIGLGLVVLLPLANPLTTVALFLGLAGNMNGAERNRQSLMASVYVFAIMMVAYYAGQLVMDTFGISIPGLRIAGGLIVAFIGFRMLFPQQKAIDSPEAKSKSEELEDEPSANIAFVPLAMPSTAGPGTIAMIISSASTVRQSSTFADWVLMVAPPLIFFLVAVILWGSLRSSGAIMRLVGKGGIEAISRLMGFLLVCMGVQFIINGILEIIKTNH</sequence>
<dbReference type="EMBL" id="AF337816">
    <property type="protein sequence ID" value="AAK21291.1"/>
    <property type="molecule type" value="Genomic_DNA"/>
</dbReference>
<dbReference type="EMBL" id="AE005174">
    <property type="protein sequence ID" value="AAG56235.1"/>
    <property type="molecule type" value="Genomic_DNA"/>
</dbReference>
<dbReference type="EMBL" id="BA000007">
    <property type="protein sequence ID" value="BAB35559.1"/>
    <property type="molecule type" value="Genomic_DNA"/>
</dbReference>
<dbReference type="PIR" id="G85721">
    <property type="entry name" value="G85721"/>
</dbReference>
<dbReference type="PIR" id="H90895">
    <property type="entry name" value="H90895"/>
</dbReference>
<dbReference type="RefSeq" id="NP_310163.1">
    <property type="nucleotide sequence ID" value="NC_002695.1"/>
</dbReference>
<dbReference type="RefSeq" id="WP_000885016.1">
    <property type="nucleotide sequence ID" value="NZ_VOAI01000024.1"/>
</dbReference>
<dbReference type="RefSeq" id="WP_000885017.1">
    <property type="nucleotide sequence ID" value="NZ_SWKA01000005.1"/>
</dbReference>
<dbReference type="STRING" id="155864.Z2172"/>
<dbReference type="GeneID" id="917334"/>
<dbReference type="KEGG" id="ece:Z2172"/>
<dbReference type="KEGG" id="ecs:ECs_2136"/>
<dbReference type="PATRIC" id="fig|386585.9.peg.2243"/>
<dbReference type="eggNOG" id="COG2095">
    <property type="taxonomic scope" value="Bacteria"/>
</dbReference>
<dbReference type="HOGENOM" id="CLU_079909_2_0_6"/>
<dbReference type="OMA" id="MLIMIDP"/>
<dbReference type="Proteomes" id="UP000000558">
    <property type="component" value="Chromosome"/>
</dbReference>
<dbReference type="Proteomes" id="UP000002519">
    <property type="component" value="Chromosome"/>
</dbReference>
<dbReference type="GO" id="GO:0005886">
    <property type="term" value="C:plasma membrane"/>
    <property type="evidence" value="ECO:0007669"/>
    <property type="project" value="UniProtKB-SubCell"/>
</dbReference>
<dbReference type="InterPro" id="IPR002771">
    <property type="entry name" value="Multi_antbiot-R_MarC"/>
</dbReference>
<dbReference type="NCBIfam" id="TIGR00427">
    <property type="entry name" value="NAAT family transporter"/>
    <property type="match status" value="1"/>
</dbReference>
<dbReference type="NCBIfam" id="NF008228">
    <property type="entry name" value="PRK10995.1"/>
    <property type="match status" value="1"/>
</dbReference>
<dbReference type="PANTHER" id="PTHR33508:SF2">
    <property type="entry name" value="UPF0056 INNER MEMBRANE PROTEIN MARC"/>
    <property type="match status" value="1"/>
</dbReference>
<dbReference type="PANTHER" id="PTHR33508">
    <property type="entry name" value="UPF0056 MEMBRANE PROTEIN YHCE"/>
    <property type="match status" value="1"/>
</dbReference>
<dbReference type="Pfam" id="PF01914">
    <property type="entry name" value="MarC"/>
    <property type="match status" value="1"/>
</dbReference>
<feature type="chain" id="PRO_0000343817" description="UPF0056 inner membrane protein MarC">
    <location>
        <begin position="1"/>
        <end position="221"/>
    </location>
</feature>
<feature type="topological domain" description="Periplasmic" evidence="2">
    <location>
        <begin position="1"/>
        <end position="7"/>
    </location>
</feature>
<feature type="transmembrane region" description="Helical" evidence="2">
    <location>
        <begin position="8"/>
        <end position="28"/>
    </location>
</feature>
<feature type="topological domain" description="Cytoplasmic" evidence="2">
    <location>
        <begin position="29"/>
        <end position="44"/>
    </location>
</feature>
<feature type="transmembrane region" description="Helical" evidence="2">
    <location>
        <begin position="45"/>
        <end position="65"/>
    </location>
</feature>
<feature type="topological domain" description="Periplasmic" evidence="2">
    <location>
        <begin position="66"/>
        <end position="68"/>
    </location>
</feature>
<feature type="transmembrane region" description="Helical" evidence="2">
    <location>
        <begin position="69"/>
        <end position="89"/>
    </location>
</feature>
<feature type="topological domain" description="Cytoplasmic" evidence="2">
    <location>
        <begin position="90"/>
        <end position="118"/>
    </location>
</feature>
<feature type="transmembrane region" description="Helical" evidence="2">
    <location>
        <begin position="119"/>
        <end position="139"/>
    </location>
</feature>
<feature type="topological domain" description="Periplasmic" evidence="2">
    <location>
        <begin position="140"/>
        <end position="154"/>
    </location>
</feature>
<feature type="transmembrane region" description="Helical" evidence="2">
    <location>
        <begin position="155"/>
        <end position="175"/>
    </location>
</feature>
<feature type="topological domain" description="Cytoplasmic" evidence="2">
    <location>
        <begin position="176"/>
        <end position="196"/>
    </location>
</feature>
<feature type="transmembrane region" description="Helical" evidence="2">
    <location>
        <begin position="197"/>
        <end position="217"/>
    </location>
</feature>
<feature type="topological domain" description="Periplasmic" evidence="2">
    <location>
        <begin position="218"/>
        <end position="221"/>
    </location>
</feature>
<feature type="sequence conflict" description="In Ref. 1; AAK21291." evidence="3" ref="1">
    <original>N</original>
    <variation>Y</variation>
    <location>
        <position position="220"/>
    </location>
</feature>
<reference key="1">
    <citation type="journal article" date="2003" name="Int. J. Food Microbiol.">
        <title>Characterization of an Escherichia coli O157:H7 marR mutant.</title>
        <authorList>
            <person name="Yaron S."/>
            <person name="White D.G."/>
            <person name="Matthews K.R."/>
        </authorList>
    </citation>
    <scope>NUCLEOTIDE SEQUENCE [GENOMIC DNA]</scope>
    <source>
        <strain>RU121</strain>
    </source>
</reference>
<reference key="2">
    <citation type="journal article" date="2001" name="Nature">
        <title>Genome sequence of enterohaemorrhagic Escherichia coli O157:H7.</title>
        <authorList>
            <person name="Perna N.T."/>
            <person name="Plunkett G. III"/>
            <person name="Burland V."/>
            <person name="Mau B."/>
            <person name="Glasner J.D."/>
            <person name="Rose D.J."/>
            <person name="Mayhew G.F."/>
            <person name="Evans P.S."/>
            <person name="Gregor J."/>
            <person name="Kirkpatrick H.A."/>
            <person name="Posfai G."/>
            <person name="Hackett J."/>
            <person name="Klink S."/>
            <person name="Boutin A."/>
            <person name="Shao Y."/>
            <person name="Miller L."/>
            <person name="Grotbeck E.J."/>
            <person name="Davis N.W."/>
            <person name="Lim A."/>
            <person name="Dimalanta E.T."/>
            <person name="Potamousis K."/>
            <person name="Apodaca J."/>
            <person name="Anantharaman T.S."/>
            <person name="Lin J."/>
            <person name="Yen G."/>
            <person name="Schwartz D.C."/>
            <person name="Welch R.A."/>
            <person name="Blattner F.R."/>
        </authorList>
    </citation>
    <scope>NUCLEOTIDE SEQUENCE [LARGE SCALE GENOMIC DNA]</scope>
    <source>
        <strain>O157:H7 / EDL933 / ATCC 700927 / EHEC</strain>
    </source>
</reference>
<reference key="3">
    <citation type="journal article" date="2001" name="DNA Res.">
        <title>Complete genome sequence of enterohemorrhagic Escherichia coli O157:H7 and genomic comparison with a laboratory strain K-12.</title>
        <authorList>
            <person name="Hayashi T."/>
            <person name="Makino K."/>
            <person name="Ohnishi M."/>
            <person name="Kurokawa K."/>
            <person name="Ishii K."/>
            <person name="Yokoyama K."/>
            <person name="Han C.-G."/>
            <person name="Ohtsubo E."/>
            <person name="Nakayama K."/>
            <person name="Murata T."/>
            <person name="Tanaka M."/>
            <person name="Tobe T."/>
            <person name="Iida T."/>
            <person name="Takami H."/>
            <person name="Honda T."/>
            <person name="Sasakawa C."/>
            <person name="Ogasawara N."/>
            <person name="Yasunaga T."/>
            <person name="Kuhara S."/>
            <person name="Shiba T."/>
            <person name="Hattori M."/>
            <person name="Shinagawa H."/>
        </authorList>
    </citation>
    <scope>NUCLEOTIDE SEQUENCE [LARGE SCALE GENOMIC DNA]</scope>
    <source>
        <strain>O157:H7 / Sakai / RIMD 0509952 / EHEC</strain>
    </source>
</reference>
<organism>
    <name type="scientific">Escherichia coli O157:H7</name>
    <dbReference type="NCBI Taxonomy" id="83334"/>
    <lineage>
        <taxon>Bacteria</taxon>
        <taxon>Pseudomonadati</taxon>
        <taxon>Pseudomonadota</taxon>
        <taxon>Gammaproteobacteria</taxon>
        <taxon>Enterobacterales</taxon>
        <taxon>Enterobacteriaceae</taxon>
        <taxon>Escherichia</taxon>
    </lineage>
</organism>
<protein>
    <recommendedName>
        <fullName>UPF0056 inner membrane protein MarC</fullName>
    </recommendedName>
</protein>
<comment type="subcellular location">
    <subcellularLocation>
        <location evidence="1">Cell inner membrane</location>
        <topology evidence="1">Multi-pass membrane protein</topology>
    </subcellularLocation>
</comment>
<comment type="similarity">
    <text evidence="3">Belongs to the UPF0056 (MarC) family.</text>
</comment>
<proteinExistence type="inferred from homology"/>
<accession>Q7ADY8</accession>
<accession>Q8XB08</accession>
<accession>Q9AGA5</accession>
<gene>
    <name type="primary">marC</name>
    <name type="ordered locus">Z2172</name>
    <name type="ordered locus">ECs2136</name>
</gene>
<evidence type="ECO:0000250" key="1"/>
<evidence type="ECO:0000255" key="2"/>
<evidence type="ECO:0000305" key="3"/>
<keyword id="KW-0997">Cell inner membrane</keyword>
<keyword id="KW-1003">Cell membrane</keyword>
<keyword id="KW-0472">Membrane</keyword>
<keyword id="KW-1185">Reference proteome</keyword>
<keyword id="KW-0812">Transmembrane</keyword>
<keyword id="KW-1133">Transmembrane helix</keyword>
<name>MARC_ECO57</name>